<name>DADA_HELPY</name>
<sequence>MKKEVVVIGGGIVGLSCAYSMHKLGHKVCVIEKNDGANGTSFGNAGLISAFKKAPLSCPGVVLDTLKLMLKNQAPLKFHFGLNLKLYQWILKFVKSANAKSTHRTMALFERYGWLSIDMYHQMLKDGMDFWYKEDGLLMIYTLEESFEKKLKTCDNSGAYKILSAKETKEYMPVVNDNICGSVLLTENAHVDPGEVMHSLQEYLQNVGVEFLYNEEVIDFEFKNNLIEGVITHKEKIQAETIILATGANPTLIKKTKNDFLMMGAKGYSITFKMPEELKPKTSSLFADIFMAMTPRRDTVRITSKLELNTNNALIDKEQIANMKKNLAAFTQPFEMKDAIEWCGFRPLTPNDIPYLGYDKRYKNLIHATGLGWLGITFGPAIGKIIANLSQDGANEKNADIMLFSAFFRD</sequence>
<organism>
    <name type="scientific">Helicobacter pylori (strain ATCC 700392 / 26695)</name>
    <name type="common">Campylobacter pylori</name>
    <dbReference type="NCBI Taxonomy" id="85962"/>
    <lineage>
        <taxon>Bacteria</taxon>
        <taxon>Pseudomonadati</taxon>
        <taxon>Campylobacterota</taxon>
        <taxon>Epsilonproteobacteria</taxon>
        <taxon>Campylobacterales</taxon>
        <taxon>Helicobacteraceae</taxon>
        <taxon>Helicobacter</taxon>
    </lineage>
</organism>
<proteinExistence type="inferred from homology"/>
<dbReference type="EC" id="1.4.5.1" evidence="1"/>
<dbReference type="EMBL" id="AE000511">
    <property type="protein sequence ID" value="AAD07988.1"/>
    <property type="molecule type" value="Genomic_DNA"/>
</dbReference>
<dbReference type="PIR" id="G64637">
    <property type="entry name" value="G64637"/>
</dbReference>
<dbReference type="RefSeq" id="NP_207735.1">
    <property type="nucleotide sequence ID" value="NC_000915.1"/>
</dbReference>
<dbReference type="RefSeq" id="WP_000712480.1">
    <property type="nucleotide sequence ID" value="NC_018939.1"/>
</dbReference>
<dbReference type="SMR" id="O25597"/>
<dbReference type="FunCoup" id="O25597">
    <property type="interactions" value="281"/>
</dbReference>
<dbReference type="STRING" id="85962.HP_0943"/>
<dbReference type="PaxDb" id="85962-C694_04855"/>
<dbReference type="DNASU" id="899472"/>
<dbReference type="EnsemblBacteria" id="AAD07988">
    <property type="protein sequence ID" value="AAD07988"/>
    <property type="gene ID" value="HP_0943"/>
</dbReference>
<dbReference type="KEGG" id="heo:C694_04855"/>
<dbReference type="KEGG" id="hpy:HP_0943"/>
<dbReference type="PATRIC" id="fig|85962.47.peg.1009"/>
<dbReference type="eggNOG" id="COG0665">
    <property type="taxonomic scope" value="Bacteria"/>
</dbReference>
<dbReference type="InParanoid" id="O25597"/>
<dbReference type="OrthoDB" id="9805337at2"/>
<dbReference type="PhylomeDB" id="O25597"/>
<dbReference type="Proteomes" id="UP000000429">
    <property type="component" value="Chromosome"/>
</dbReference>
<dbReference type="GO" id="GO:0005737">
    <property type="term" value="C:cytoplasm"/>
    <property type="evidence" value="ECO:0000318"/>
    <property type="project" value="GO_Central"/>
</dbReference>
<dbReference type="GO" id="GO:0005886">
    <property type="term" value="C:plasma membrane"/>
    <property type="evidence" value="ECO:0007669"/>
    <property type="project" value="UniProtKB-SubCell"/>
</dbReference>
<dbReference type="GO" id="GO:0008718">
    <property type="term" value="F:D-amino-acid dehydrogenase activity"/>
    <property type="evidence" value="ECO:0007669"/>
    <property type="project" value="UniProtKB-EC"/>
</dbReference>
<dbReference type="Gene3D" id="3.30.9.10">
    <property type="entry name" value="D-Amino Acid Oxidase, subunit A, domain 2"/>
    <property type="match status" value="1"/>
</dbReference>
<dbReference type="Gene3D" id="3.50.50.60">
    <property type="entry name" value="FAD/NAD(P)-binding domain"/>
    <property type="match status" value="2"/>
</dbReference>
<dbReference type="InterPro" id="IPR006076">
    <property type="entry name" value="FAD-dep_OxRdtase"/>
</dbReference>
<dbReference type="InterPro" id="IPR036188">
    <property type="entry name" value="FAD/NAD-bd_sf"/>
</dbReference>
<dbReference type="PANTHER" id="PTHR13847:SF286">
    <property type="entry name" value="D-AMINO ACID DEHYDROGENASE"/>
    <property type="match status" value="1"/>
</dbReference>
<dbReference type="PANTHER" id="PTHR13847">
    <property type="entry name" value="SARCOSINE DEHYDROGENASE-RELATED"/>
    <property type="match status" value="1"/>
</dbReference>
<dbReference type="Pfam" id="PF01266">
    <property type="entry name" value="DAO"/>
    <property type="match status" value="1"/>
</dbReference>
<dbReference type="SUPFAM" id="SSF51905">
    <property type="entry name" value="FAD/NAD(P)-binding domain"/>
    <property type="match status" value="1"/>
</dbReference>
<comment type="function">
    <text evidence="1">Catalyzes the oxidative deamination of D-amino acids. Has broad substrate specificity; is mostly active on D-proline, and to a lesser extent, on several other D-amino acids such as D-alanine, D-phenylalanine and D-serine. Mediates electron transport from D-proline to coenzyme Q1 in vitro, and is involved in the electron transport chain from D-proline to the c-type cytochrome in vivo.</text>
</comment>
<comment type="catalytic activity">
    <reaction evidence="1">
        <text>a D-alpha-amino acid + a quinone + H2O = a 2-oxocarboxylate + a quinol + NH4(+)</text>
        <dbReference type="Rhea" id="RHEA:45996"/>
        <dbReference type="ChEBI" id="CHEBI:15377"/>
        <dbReference type="ChEBI" id="CHEBI:24646"/>
        <dbReference type="ChEBI" id="CHEBI:28938"/>
        <dbReference type="ChEBI" id="CHEBI:35179"/>
        <dbReference type="ChEBI" id="CHEBI:59871"/>
        <dbReference type="ChEBI" id="CHEBI:132124"/>
        <dbReference type="EC" id="1.4.5.1"/>
    </reaction>
</comment>
<comment type="cofactor">
    <cofactor evidence="1">
        <name>FAD</name>
        <dbReference type="ChEBI" id="CHEBI:57692"/>
    </cofactor>
</comment>
<comment type="subcellular location">
    <subcellularLocation>
        <location evidence="1">Cell inner membrane</location>
        <topology evidence="2">Peripheral membrane protein</topology>
    </subcellularLocation>
</comment>
<comment type="similarity">
    <text evidence="2">Belongs to the DadA oxidoreductase family.</text>
</comment>
<protein>
    <recommendedName>
        <fullName evidence="1">D-amino acid dehydrogenase</fullName>
        <shortName evidence="1">DAD</shortName>
        <ecNumber evidence="1">1.4.5.1</ecNumber>
    </recommendedName>
</protein>
<reference key="1">
    <citation type="journal article" date="1997" name="Nature">
        <title>The complete genome sequence of the gastric pathogen Helicobacter pylori.</title>
        <authorList>
            <person name="Tomb J.-F."/>
            <person name="White O."/>
            <person name="Kerlavage A.R."/>
            <person name="Clayton R.A."/>
            <person name="Sutton G.G."/>
            <person name="Fleischmann R.D."/>
            <person name="Ketchum K.A."/>
            <person name="Klenk H.-P."/>
            <person name="Gill S.R."/>
            <person name="Dougherty B.A."/>
            <person name="Nelson K.E."/>
            <person name="Quackenbush J."/>
            <person name="Zhou L."/>
            <person name="Kirkness E.F."/>
            <person name="Peterson S.N."/>
            <person name="Loftus B.J."/>
            <person name="Richardson D.L."/>
            <person name="Dodson R.J."/>
            <person name="Khalak H.G."/>
            <person name="Glodek A."/>
            <person name="McKenney K."/>
            <person name="FitzGerald L.M."/>
            <person name="Lee N."/>
            <person name="Adams M.D."/>
            <person name="Hickey E.K."/>
            <person name="Berg D.E."/>
            <person name="Gocayne J.D."/>
            <person name="Utterback T.R."/>
            <person name="Peterson J.D."/>
            <person name="Kelley J.M."/>
            <person name="Cotton M.D."/>
            <person name="Weidman J.F."/>
            <person name="Fujii C."/>
            <person name="Bowman C."/>
            <person name="Watthey L."/>
            <person name="Wallin E."/>
            <person name="Hayes W.S."/>
            <person name="Borodovsky M."/>
            <person name="Karp P.D."/>
            <person name="Smith H.O."/>
            <person name="Fraser C.M."/>
            <person name="Venter J.C."/>
        </authorList>
    </citation>
    <scope>NUCLEOTIDE SEQUENCE [LARGE SCALE GENOMIC DNA]</scope>
    <source>
        <strain>ATCC 700392 / 26695</strain>
    </source>
</reference>
<evidence type="ECO:0000250" key="1">
    <source>
        <dbReference type="UniProtKB" id="A3KEZ1"/>
    </source>
</evidence>
<evidence type="ECO:0000305" key="2"/>
<feature type="chain" id="PRO_0000166162" description="D-amino acid dehydrogenase">
    <location>
        <begin position="1"/>
        <end position="410"/>
    </location>
</feature>
<feature type="binding site" evidence="1">
    <location>
        <begin position="9"/>
        <end position="14"/>
    </location>
    <ligand>
        <name>FAD</name>
        <dbReference type="ChEBI" id="CHEBI:57692"/>
    </ligand>
</feature>
<keyword id="KW-0997">Cell inner membrane</keyword>
<keyword id="KW-1003">Cell membrane</keyword>
<keyword id="KW-0249">Electron transport</keyword>
<keyword id="KW-0274">FAD</keyword>
<keyword id="KW-0285">Flavoprotein</keyword>
<keyword id="KW-0472">Membrane</keyword>
<keyword id="KW-0560">Oxidoreductase</keyword>
<keyword id="KW-1185">Reference proteome</keyword>
<keyword id="KW-0813">Transport</keyword>
<gene>
    <name evidence="1" type="primary">dadA</name>
    <name type="ordered locus">HP_0943</name>
</gene>
<accession>O25597</accession>